<comment type="function">
    <text evidence="1">Hydrolyzes ribosome-free peptidyl-tRNAs (with 1 or more amino acids incorporated), which drop off the ribosome during protein synthesis, or as a result of ribosome stalling.</text>
</comment>
<comment type="function">
    <text evidence="1">Catalyzes the release of premature peptidyl moieties from peptidyl-tRNA molecules trapped in stalled 50S ribosomal subunits, and thus maintains levels of free tRNAs and 50S ribosomes.</text>
</comment>
<comment type="catalytic activity">
    <reaction evidence="1">
        <text>an N-acyl-L-alpha-aminoacyl-tRNA + H2O = an N-acyl-L-amino acid + a tRNA + H(+)</text>
        <dbReference type="Rhea" id="RHEA:54448"/>
        <dbReference type="Rhea" id="RHEA-COMP:10123"/>
        <dbReference type="Rhea" id="RHEA-COMP:13883"/>
        <dbReference type="ChEBI" id="CHEBI:15377"/>
        <dbReference type="ChEBI" id="CHEBI:15378"/>
        <dbReference type="ChEBI" id="CHEBI:59874"/>
        <dbReference type="ChEBI" id="CHEBI:78442"/>
        <dbReference type="ChEBI" id="CHEBI:138191"/>
        <dbReference type="EC" id="3.1.1.29"/>
    </reaction>
</comment>
<comment type="subunit">
    <text evidence="1">Monomer.</text>
</comment>
<comment type="subcellular location">
    <subcellularLocation>
        <location evidence="1">Cytoplasm</location>
    </subcellularLocation>
</comment>
<comment type="similarity">
    <text evidence="1">Belongs to the PTH family.</text>
</comment>
<feature type="chain" id="PRO_1000075353" description="Peptidyl-tRNA hydrolase">
    <location>
        <begin position="1"/>
        <end position="214"/>
    </location>
</feature>
<feature type="region of interest" description="Disordered" evidence="2">
    <location>
        <begin position="184"/>
        <end position="214"/>
    </location>
</feature>
<feature type="active site" description="Proton acceptor" evidence="1">
    <location>
        <position position="19"/>
    </location>
</feature>
<feature type="binding site" evidence="1">
    <location>
        <position position="14"/>
    </location>
    <ligand>
        <name>tRNA</name>
        <dbReference type="ChEBI" id="CHEBI:17843"/>
    </ligand>
</feature>
<feature type="binding site" evidence="1">
    <location>
        <position position="64"/>
    </location>
    <ligand>
        <name>tRNA</name>
        <dbReference type="ChEBI" id="CHEBI:17843"/>
    </ligand>
</feature>
<feature type="binding site" evidence="1">
    <location>
        <position position="66"/>
    </location>
    <ligand>
        <name>tRNA</name>
        <dbReference type="ChEBI" id="CHEBI:17843"/>
    </ligand>
</feature>
<feature type="binding site" evidence="1">
    <location>
        <position position="113"/>
    </location>
    <ligand>
        <name>tRNA</name>
        <dbReference type="ChEBI" id="CHEBI:17843"/>
    </ligand>
</feature>
<feature type="site" description="Discriminates between blocked and unblocked aminoacyl-tRNA" evidence="1">
    <location>
        <position position="9"/>
    </location>
</feature>
<feature type="site" description="Stabilizes the basic form of H active site to accept a proton" evidence="1">
    <location>
        <position position="92"/>
    </location>
</feature>
<dbReference type="EC" id="3.1.1.29" evidence="1"/>
<dbReference type="EMBL" id="CP000804">
    <property type="protein sequence ID" value="ABU57821.1"/>
    <property type="molecule type" value="Genomic_DNA"/>
</dbReference>
<dbReference type="RefSeq" id="WP_012120247.1">
    <property type="nucleotide sequence ID" value="NC_009767.1"/>
</dbReference>
<dbReference type="SMR" id="A7NK01"/>
<dbReference type="STRING" id="383372.Rcas_1729"/>
<dbReference type="KEGG" id="rca:Rcas_1729"/>
<dbReference type="eggNOG" id="COG0193">
    <property type="taxonomic scope" value="Bacteria"/>
</dbReference>
<dbReference type="HOGENOM" id="CLU_062456_4_1_0"/>
<dbReference type="OrthoDB" id="9800507at2"/>
<dbReference type="Proteomes" id="UP000000263">
    <property type="component" value="Chromosome"/>
</dbReference>
<dbReference type="GO" id="GO:0005737">
    <property type="term" value="C:cytoplasm"/>
    <property type="evidence" value="ECO:0007669"/>
    <property type="project" value="UniProtKB-SubCell"/>
</dbReference>
<dbReference type="GO" id="GO:0004045">
    <property type="term" value="F:peptidyl-tRNA hydrolase activity"/>
    <property type="evidence" value="ECO:0007669"/>
    <property type="project" value="UniProtKB-UniRule"/>
</dbReference>
<dbReference type="GO" id="GO:0000049">
    <property type="term" value="F:tRNA binding"/>
    <property type="evidence" value="ECO:0007669"/>
    <property type="project" value="UniProtKB-UniRule"/>
</dbReference>
<dbReference type="GO" id="GO:0006515">
    <property type="term" value="P:protein quality control for misfolded or incompletely synthesized proteins"/>
    <property type="evidence" value="ECO:0007669"/>
    <property type="project" value="UniProtKB-UniRule"/>
</dbReference>
<dbReference type="GO" id="GO:0072344">
    <property type="term" value="P:rescue of stalled ribosome"/>
    <property type="evidence" value="ECO:0007669"/>
    <property type="project" value="UniProtKB-UniRule"/>
</dbReference>
<dbReference type="CDD" id="cd00462">
    <property type="entry name" value="PTH"/>
    <property type="match status" value="1"/>
</dbReference>
<dbReference type="FunFam" id="3.40.50.1470:FF:000001">
    <property type="entry name" value="Peptidyl-tRNA hydrolase"/>
    <property type="match status" value="1"/>
</dbReference>
<dbReference type="Gene3D" id="3.40.50.1470">
    <property type="entry name" value="Peptidyl-tRNA hydrolase"/>
    <property type="match status" value="1"/>
</dbReference>
<dbReference type="HAMAP" id="MF_00083">
    <property type="entry name" value="Pept_tRNA_hydro_bact"/>
    <property type="match status" value="1"/>
</dbReference>
<dbReference type="InterPro" id="IPR001328">
    <property type="entry name" value="Pept_tRNA_hydro"/>
</dbReference>
<dbReference type="InterPro" id="IPR018171">
    <property type="entry name" value="Pept_tRNA_hydro_CS"/>
</dbReference>
<dbReference type="InterPro" id="IPR036416">
    <property type="entry name" value="Pept_tRNA_hydro_sf"/>
</dbReference>
<dbReference type="NCBIfam" id="TIGR00447">
    <property type="entry name" value="pth"/>
    <property type="match status" value="1"/>
</dbReference>
<dbReference type="PANTHER" id="PTHR17224">
    <property type="entry name" value="PEPTIDYL-TRNA HYDROLASE"/>
    <property type="match status" value="1"/>
</dbReference>
<dbReference type="PANTHER" id="PTHR17224:SF1">
    <property type="entry name" value="PEPTIDYL-TRNA HYDROLASE"/>
    <property type="match status" value="1"/>
</dbReference>
<dbReference type="Pfam" id="PF01195">
    <property type="entry name" value="Pept_tRNA_hydro"/>
    <property type="match status" value="1"/>
</dbReference>
<dbReference type="SUPFAM" id="SSF53178">
    <property type="entry name" value="Peptidyl-tRNA hydrolase-like"/>
    <property type="match status" value="1"/>
</dbReference>
<dbReference type="PROSITE" id="PS01196">
    <property type="entry name" value="PEPT_TRNA_HYDROL_2"/>
    <property type="match status" value="1"/>
</dbReference>
<protein>
    <recommendedName>
        <fullName evidence="1">Peptidyl-tRNA hydrolase</fullName>
        <shortName evidence="1">Pth</shortName>
        <ecNumber evidence="1">3.1.1.29</ecNumber>
    </recommendedName>
</protein>
<keyword id="KW-0963">Cytoplasm</keyword>
<keyword id="KW-0378">Hydrolase</keyword>
<keyword id="KW-1185">Reference proteome</keyword>
<keyword id="KW-0694">RNA-binding</keyword>
<keyword id="KW-0820">tRNA-binding</keyword>
<proteinExistence type="inferred from homology"/>
<gene>
    <name evidence="1" type="primary">pth</name>
    <name type="ordered locus">Rcas_1729</name>
</gene>
<organism>
    <name type="scientific">Roseiflexus castenholzii (strain DSM 13941 / HLO8)</name>
    <dbReference type="NCBI Taxonomy" id="383372"/>
    <lineage>
        <taxon>Bacteria</taxon>
        <taxon>Bacillati</taxon>
        <taxon>Chloroflexota</taxon>
        <taxon>Chloroflexia</taxon>
        <taxon>Chloroflexales</taxon>
        <taxon>Roseiflexineae</taxon>
        <taxon>Roseiflexaceae</taxon>
        <taxon>Roseiflexus</taxon>
    </lineage>
</organism>
<accession>A7NK01</accession>
<name>PTH_ROSCS</name>
<evidence type="ECO:0000255" key="1">
    <source>
        <dbReference type="HAMAP-Rule" id="MF_00083"/>
    </source>
</evidence>
<evidence type="ECO:0000256" key="2">
    <source>
        <dbReference type="SAM" id="MobiDB-lite"/>
    </source>
</evidence>
<sequence length="214" mass="23584">MWLIVGLGNPGETYARTRHNIGFRVVTELAQRHHLRFTHKRAKAEIAEGEIAGQRVALALPQTYMNLSGQAVVGLRQWYKIDPATELLVVYDDVDLPFGVLRLRERGSAGTHNGMRSIVALLGSQVFPRLRIGIDRPPVAWNLADYVLARFTPEQEAQLPEVTRRAADALELVLREGIVVAMNRINAPPPKPEKKRGSETSDPSAESADHAGGG</sequence>
<reference key="1">
    <citation type="submission" date="2007-08" db="EMBL/GenBank/DDBJ databases">
        <title>Complete sequence of Roseiflexus castenholzii DSM 13941.</title>
        <authorList>
            <consortium name="US DOE Joint Genome Institute"/>
            <person name="Copeland A."/>
            <person name="Lucas S."/>
            <person name="Lapidus A."/>
            <person name="Barry K."/>
            <person name="Glavina del Rio T."/>
            <person name="Dalin E."/>
            <person name="Tice H."/>
            <person name="Pitluck S."/>
            <person name="Thompson L.S."/>
            <person name="Brettin T."/>
            <person name="Bruce D."/>
            <person name="Detter J.C."/>
            <person name="Han C."/>
            <person name="Tapia R."/>
            <person name="Schmutz J."/>
            <person name="Larimer F."/>
            <person name="Land M."/>
            <person name="Hauser L."/>
            <person name="Kyrpides N."/>
            <person name="Mikhailova N."/>
            <person name="Bryant D.A."/>
            <person name="Hanada S."/>
            <person name="Tsukatani Y."/>
            <person name="Richardson P."/>
        </authorList>
    </citation>
    <scope>NUCLEOTIDE SEQUENCE [LARGE SCALE GENOMIC DNA]</scope>
    <source>
        <strain>DSM 13941 / HLO8</strain>
    </source>
</reference>